<evidence type="ECO:0000255" key="1">
    <source>
        <dbReference type="HAMAP-Rule" id="MF_00438"/>
    </source>
</evidence>
<protein>
    <recommendedName>
        <fullName evidence="1">Photosystem II reaction center protein M</fullName>
        <shortName evidence="1">PSII-M</shortName>
    </recommendedName>
</protein>
<name>PSBM_PSINU</name>
<gene>
    <name evidence="1" type="primary">psbM</name>
</gene>
<sequence>MEVNILAFIATALFISIPTAFLLIPYVQTATQSN</sequence>
<dbReference type="EMBL" id="AP004638">
    <property type="protein sequence ID" value="BAB84210.1"/>
    <property type="molecule type" value="Genomic_DNA"/>
</dbReference>
<dbReference type="RefSeq" id="NP_569623.1">
    <property type="nucleotide sequence ID" value="NC_003386.1"/>
</dbReference>
<dbReference type="SMR" id="Q8WI22"/>
<dbReference type="GeneID" id="2545149"/>
<dbReference type="GO" id="GO:0009535">
    <property type="term" value="C:chloroplast thylakoid membrane"/>
    <property type="evidence" value="ECO:0007669"/>
    <property type="project" value="UniProtKB-SubCell"/>
</dbReference>
<dbReference type="GO" id="GO:0009523">
    <property type="term" value="C:photosystem II"/>
    <property type="evidence" value="ECO:0007669"/>
    <property type="project" value="UniProtKB-KW"/>
</dbReference>
<dbReference type="GO" id="GO:0019684">
    <property type="term" value="P:photosynthesis, light reaction"/>
    <property type="evidence" value="ECO:0007669"/>
    <property type="project" value="InterPro"/>
</dbReference>
<dbReference type="HAMAP" id="MF_00438">
    <property type="entry name" value="PSII_PsbM"/>
    <property type="match status" value="1"/>
</dbReference>
<dbReference type="InterPro" id="IPR007826">
    <property type="entry name" value="PSII_PsbM"/>
</dbReference>
<dbReference type="InterPro" id="IPR037269">
    <property type="entry name" value="PSII_PsbM_sf"/>
</dbReference>
<dbReference type="NCBIfam" id="TIGR03038">
    <property type="entry name" value="PS_II_psbM"/>
    <property type="match status" value="1"/>
</dbReference>
<dbReference type="PANTHER" id="PTHR35774">
    <property type="entry name" value="PHOTOSYSTEM II REACTION CENTER PROTEIN M"/>
    <property type="match status" value="1"/>
</dbReference>
<dbReference type="PANTHER" id="PTHR35774:SF1">
    <property type="entry name" value="PHOTOSYSTEM II REACTION CENTER PROTEIN M"/>
    <property type="match status" value="1"/>
</dbReference>
<dbReference type="Pfam" id="PF05151">
    <property type="entry name" value="PsbM"/>
    <property type="match status" value="1"/>
</dbReference>
<dbReference type="SUPFAM" id="SSF161033">
    <property type="entry name" value="Photosystem II reaction center protein M, PsbM"/>
    <property type="match status" value="1"/>
</dbReference>
<keyword id="KW-0150">Chloroplast</keyword>
<keyword id="KW-0472">Membrane</keyword>
<keyword id="KW-0602">Photosynthesis</keyword>
<keyword id="KW-0604">Photosystem II</keyword>
<keyword id="KW-0934">Plastid</keyword>
<keyword id="KW-0674">Reaction center</keyword>
<keyword id="KW-0793">Thylakoid</keyword>
<keyword id="KW-0812">Transmembrane</keyword>
<keyword id="KW-1133">Transmembrane helix</keyword>
<comment type="function">
    <text evidence="1">One of the components of the core complex of photosystem II (PSII). PSII is a light-driven water:plastoquinone oxidoreductase that uses light energy to abstract electrons from H(2)O, generating O(2) and a proton gradient subsequently used for ATP formation. It consists of a core antenna complex that captures photons, and an electron transfer chain that converts photonic excitation into a charge separation. This subunit is found at the monomer-monomer interface.</text>
</comment>
<comment type="subunit">
    <text evidence="1">PSII is composed of 1 copy each of membrane proteins PsbA, PsbB, PsbC, PsbD, PsbE, PsbF, PsbH, PsbI, PsbJ, PsbK, PsbL, PsbM, PsbT, PsbX, PsbY, PsbZ, Psb30/Ycf12, at least 3 peripheral proteins of the oxygen-evolving complex and a large number of cofactors. It forms dimeric complexes.</text>
</comment>
<comment type="subcellular location">
    <subcellularLocation>
        <location evidence="1">Plastid</location>
        <location evidence="1">Chloroplast thylakoid membrane</location>
        <topology evidence="1">Single-pass membrane protein</topology>
    </subcellularLocation>
</comment>
<comment type="similarity">
    <text evidence="1">Belongs to the PsbM family.</text>
</comment>
<organism>
    <name type="scientific">Psilotum nudum</name>
    <name type="common">Whisk fern</name>
    <name type="synonym">Lycopodium nudum</name>
    <dbReference type="NCBI Taxonomy" id="3240"/>
    <lineage>
        <taxon>Eukaryota</taxon>
        <taxon>Viridiplantae</taxon>
        <taxon>Streptophyta</taxon>
        <taxon>Embryophyta</taxon>
        <taxon>Tracheophyta</taxon>
        <taxon>Polypodiopsida</taxon>
        <taxon>Ophioglossidae</taxon>
        <taxon>Psilotales</taxon>
        <taxon>Psilotaceae</taxon>
        <taxon>Psilotum</taxon>
    </lineage>
</organism>
<reference key="1">
    <citation type="journal article" date="2004" name="Mol. Biol. Evol.">
        <title>Chloroplast phylogeny indicates that bryophytes are monophyletic.</title>
        <authorList>
            <person name="Nishiyama T."/>
            <person name="Wolf P.G."/>
            <person name="Kugita M."/>
            <person name="Sinclair R.B."/>
            <person name="Sugita M."/>
            <person name="Sugiura C."/>
            <person name="Wakasugi T."/>
            <person name="Yamada K."/>
            <person name="Yoshinaga K."/>
            <person name="Yamaguchi K."/>
            <person name="Ueda K."/>
            <person name="Hasebe M."/>
        </authorList>
    </citation>
    <scope>NUCLEOTIDE SEQUENCE [LARGE SCALE GENOMIC DNA]</scope>
    <source>
        <strain>Kingyoku</strain>
    </source>
</reference>
<accession>Q8WI22</accession>
<geneLocation type="chloroplast"/>
<proteinExistence type="inferred from homology"/>
<feature type="chain" id="PRO_0000217575" description="Photosystem II reaction center protein M">
    <location>
        <begin position="1"/>
        <end position="34"/>
    </location>
</feature>
<feature type="transmembrane region" description="Helical" evidence="1">
    <location>
        <begin position="5"/>
        <end position="25"/>
    </location>
</feature>